<comment type="miscellaneous">
    <text>ONCA and ONCB are the primary targets of protective antibody responses.</text>
</comment>
<proteinExistence type="evidence at transcript level"/>
<keyword id="KW-0677">Repeat</keyword>
<accession>P22080</accession>
<gene>
    <name type="primary">ONCA</name>
</gene>
<protein>
    <recommendedName>
        <fullName>Oncosphere antigen A</fullName>
    </recommendedName>
</protein>
<name>ONCA_HYDTA</name>
<sequence>EFRASIPQNVQIEAIDPHTARMTWDPPAKSYGSIIGYTIQWSTDDLWLEQVKVASDNSYDFKDLQSQQTIVASILAHHRPDTSVKFEYIGTRSTPVKVTTPLPSRVMKKPSFRATYCEDLEELDMLIHDPEEVVGMFGGFEVLMRAGDAELLKSWQSVVNLTAEERRYKLKGLVPSLPYAVTVRGVALPSRRFSELAEPVHFKISRAEQSVPQNVDMQATDPHTIEMTWDCRPNPTVALLATPSAGVAITRSSRSLHLASVQLYTFTGLEPQVSLSASICVHYKPQKSPNFEYISSFSEVVTATTPSVEQVDFAEGEE</sequence>
<reference key="1">
    <citation type="journal article" date="1991" name="Mol. Biochem. Parasitol.">
        <title>Molecular cloning of Taenia taeniaeformis oncosphere antigen genes.</title>
        <authorList>
            <person name="Cougle W.G."/>
            <person name="Lightowlers M.W."/>
            <person name="Bogh H.O."/>
            <person name="Rickard M.D."/>
            <person name="Johnson K.S."/>
        </authorList>
    </citation>
    <scope>NUCLEOTIDE SEQUENCE [MRNA]</scope>
</reference>
<feature type="chain" id="PRO_0000058048" description="Oncosphere antigen A">
    <location>
        <begin position="1" status="less than"/>
        <end position="318"/>
    </location>
</feature>
<feature type="domain" description="Fibronectin type-III 1" evidence="1">
    <location>
        <begin position="6"/>
        <end position="103"/>
    </location>
</feature>
<feature type="domain" description="Fibronectin type-III 2" evidence="1">
    <location>
        <begin position="109"/>
        <end position="207"/>
    </location>
</feature>
<feature type="domain" description="Fibronectin type-III 3" evidence="1">
    <location>
        <begin position="211"/>
        <end position="308"/>
    </location>
</feature>
<feature type="non-terminal residue">
    <location>
        <position position="1"/>
    </location>
</feature>
<organism>
    <name type="scientific">Hydatigena taeniaeformis</name>
    <name type="common">Feline tapeworm</name>
    <name type="synonym">Taenia taeniaeformis</name>
    <dbReference type="NCBI Taxonomy" id="6205"/>
    <lineage>
        <taxon>Eukaryota</taxon>
        <taxon>Metazoa</taxon>
        <taxon>Spiralia</taxon>
        <taxon>Lophotrochozoa</taxon>
        <taxon>Platyhelminthes</taxon>
        <taxon>Cestoda</taxon>
        <taxon>Eucestoda</taxon>
        <taxon>Cyclophyllidea</taxon>
        <taxon>Taeniidae</taxon>
        <taxon>Hydatigera</taxon>
    </lineage>
</organism>
<dbReference type="EMBL" id="M38397">
    <property type="protein sequence ID" value="AAA63536.1"/>
    <property type="molecule type" value="mRNA"/>
</dbReference>
<dbReference type="SMR" id="P22080"/>
<dbReference type="STRING" id="6205.P22080"/>
<dbReference type="CDD" id="cd00063">
    <property type="entry name" value="FN3"/>
    <property type="match status" value="2"/>
</dbReference>
<dbReference type="Gene3D" id="2.60.40.10">
    <property type="entry name" value="Immunoglobulins"/>
    <property type="match status" value="1"/>
</dbReference>
<dbReference type="InterPro" id="IPR050991">
    <property type="entry name" value="ECM_Regulatory_Proteins"/>
</dbReference>
<dbReference type="InterPro" id="IPR003961">
    <property type="entry name" value="FN3_dom"/>
</dbReference>
<dbReference type="InterPro" id="IPR036116">
    <property type="entry name" value="FN3_sf"/>
</dbReference>
<dbReference type="InterPro" id="IPR013783">
    <property type="entry name" value="Ig-like_fold"/>
</dbReference>
<dbReference type="PANTHER" id="PTHR46708:SF2">
    <property type="entry name" value="FIBRONECTIN TYPE-III DOMAIN-CONTAINING PROTEIN"/>
    <property type="match status" value="1"/>
</dbReference>
<dbReference type="PANTHER" id="PTHR46708">
    <property type="entry name" value="TENASCIN"/>
    <property type="match status" value="1"/>
</dbReference>
<dbReference type="Pfam" id="PF00041">
    <property type="entry name" value="fn3"/>
    <property type="match status" value="1"/>
</dbReference>
<dbReference type="SMART" id="SM00060">
    <property type="entry name" value="FN3"/>
    <property type="match status" value="2"/>
</dbReference>
<dbReference type="SUPFAM" id="SSF49265">
    <property type="entry name" value="Fibronectin type III"/>
    <property type="match status" value="2"/>
</dbReference>
<dbReference type="PROSITE" id="PS50853">
    <property type="entry name" value="FN3"/>
    <property type="match status" value="3"/>
</dbReference>
<evidence type="ECO:0000255" key="1">
    <source>
        <dbReference type="PROSITE-ProRule" id="PRU00316"/>
    </source>
</evidence>